<proteinExistence type="inferred from homology"/>
<gene>
    <name evidence="1" type="primary">rhaT</name>
    <name type="ordered locus">Ecok1_38800</name>
    <name type="ORF">APECO1_2561</name>
</gene>
<accession>A1AI84</accession>
<keyword id="KW-0997">Cell inner membrane</keyword>
<keyword id="KW-1003">Cell membrane</keyword>
<keyword id="KW-0472">Membrane</keyword>
<keyword id="KW-1185">Reference proteome</keyword>
<keyword id="KW-0762">Sugar transport</keyword>
<keyword id="KW-0769">Symport</keyword>
<keyword id="KW-0812">Transmembrane</keyword>
<keyword id="KW-1133">Transmembrane helix</keyword>
<keyword id="KW-0813">Transport</keyword>
<reference key="1">
    <citation type="journal article" date="2007" name="J. Bacteriol.">
        <title>The genome sequence of avian pathogenic Escherichia coli strain O1:K1:H7 shares strong similarities with human extraintestinal pathogenic E. coli genomes.</title>
        <authorList>
            <person name="Johnson T.J."/>
            <person name="Kariyawasam S."/>
            <person name="Wannemuehler Y."/>
            <person name="Mangiamele P."/>
            <person name="Johnson S.J."/>
            <person name="Doetkott C."/>
            <person name="Skyberg J.A."/>
            <person name="Lynne A.M."/>
            <person name="Johnson J.R."/>
            <person name="Nolan L.K."/>
        </authorList>
    </citation>
    <scope>NUCLEOTIDE SEQUENCE [LARGE SCALE GENOMIC DNA]</scope>
</reference>
<name>RHAT_ECOK1</name>
<evidence type="ECO:0000255" key="1">
    <source>
        <dbReference type="HAMAP-Rule" id="MF_01532"/>
    </source>
</evidence>
<feature type="chain" id="PRO_0000292764" description="L-rhamnose-proton symporter">
    <location>
        <begin position="1"/>
        <end position="344"/>
    </location>
</feature>
<feature type="transmembrane region" description="Helical" evidence="1">
    <location>
        <begin position="4"/>
        <end position="24"/>
    </location>
</feature>
<feature type="transmembrane region" description="Helical" evidence="1">
    <location>
        <begin position="38"/>
        <end position="58"/>
    </location>
</feature>
<feature type="transmembrane region" description="Helical" evidence="1">
    <location>
        <begin position="68"/>
        <end position="88"/>
    </location>
</feature>
<feature type="transmembrane region" description="Helical" evidence="1">
    <location>
        <begin position="101"/>
        <end position="121"/>
    </location>
</feature>
<feature type="transmembrane region" description="Helical" evidence="1">
    <location>
        <begin position="137"/>
        <end position="157"/>
    </location>
</feature>
<feature type="transmembrane region" description="Helical" evidence="1">
    <location>
        <begin position="175"/>
        <end position="195"/>
    </location>
</feature>
<feature type="transmembrane region" description="Helical" evidence="1">
    <location>
        <begin position="214"/>
        <end position="234"/>
    </location>
</feature>
<feature type="transmembrane region" description="Helical" evidence="1">
    <location>
        <begin position="259"/>
        <end position="279"/>
    </location>
</feature>
<feature type="transmembrane region" description="Helical" evidence="1">
    <location>
        <begin position="290"/>
        <end position="310"/>
    </location>
</feature>
<feature type="transmembrane region" description="Helical" evidence="1">
    <location>
        <begin position="323"/>
        <end position="343"/>
    </location>
</feature>
<protein>
    <recommendedName>
        <fullName evidence="1">L-rhamnose-proton symporter</fullName>
    </recommendedName>
    <alternativeName>
        <fullName evidence="1">L-rhamnose-H(+) transport protein</fullName>
    </alternativeName>
</protein>
<dbReference type="EMBL" id="CP000468">
    <property type="protein sequence ID" value="ABJ03374.1"/>
    <property type="molecule type" value="Genomic_DNA"/>
</dbReference>
<dbReference type="RefSeq" id="WP_000063511.1">
    <property type="nucleotide sequence ID" value="NC_008563.1"/>
</dbReference>
<dbReference type="KEGG" id="ecv:APECO1_2561"/>
<dbReference type="HOGENOM" id="CLU_066437_0_0_6"/>
<dbReference type="Proteomes" id="UP000008216">
    <property type="component" value="Chromosome"/>
</dbReference>
<dbReference type="GO" id="GO:0005886">
    <property type="term" value="C:plasma membrane"/>
    <property type="evidence" value="ECO:0007669"/>
    <property type="project" value="UniProtKB-SubCell"/>
</dbReference>
<dbReference type="GO" id="GO:0015153">
    <property type="term" value="F:rhamnose transmembrane transporter activity"/>
    <property type="evidence" value="ECO:0007669"/>
    <property type="project" value="UniProtKB-UniRule"/>
</dbReference>
<dbReference type="GO" id="GO:0015293">
    <property type="term" value="F:symporter activity"/>
    <property type="evidence" value="ECO:0007669"/>
    <property type="project" value="UniProtKB-KW"/>
</dbReference>
<dbReference type="HAMAP" id="MF_01532">
    <property type="entry name" value="RhaT"/>
    <property type="match status" value="1"/>
</dbReference>
<dbReference type="InterPro" id="IPR004673">
    <property type="entry name" value="L-rhamnose-proton_sym_RhaT"/>
</dbReference>
<dbReference type="NCBIfam" id="NF010021">
    <property type="entry name" value="PRK13499.1-1"/>
    <property type="match status" value="1"/>
</dbReference>
<dbReference type="NCBIfam" id="NF010023">
    <property type="entry name" value="PRK13499.1-3"/>
    <property type="match status" value="1"/>
</dbReference>
<dbReference type="NCBIfam" id="TIGR00776">
    <property type="entry name" value="RhaT"/>
    <property type="match status" value="1"/>
</dbReference>
<dbReference type="Pfam" id="PF06379">
    <property type="entry name" value="RhaT"/>
    <property type="match status" value="1"/>
</dbReference>
<sequence>MSNAITMGIFWHLIGAASAACFYAPFKKVKKWSWETMWSVGGIVSWIILPWAISALLLPNFWAYYSSFSLSTLLPVFLFGAMWGIGNINYGLTMRYLGMSMGIGIAIGITLIVGTLMTPIINGNFDVLINTEGGRMTLLGVLVALIGVGIVTRAGQLKERKMGIKAEEFNLKKGLVLAVMCGIFSAGMSFAMNAAKPMHEAAAALGVDPLYVALPSYVVIMGGGAIINLGFCFIRLAKVKDLSLKADFSLAKPLIIHNVLLSVLGGLMWYLQFFFYAWGHARIPAQYDYISWMLHMSFYVLCGGIVGLVLKEWNNAGRRPVTVLSLGCVVIIVAANIVGIGMAN</sequence>
<organism>
    <name type="scientific">Escherichia coli O1:K1 / APEC</name>
    <dbReference type="NCBI Taxonomy" id="405955"/>
    <lineage>
        <taxon>Bacteria</taxon>
        <taxon>Pseudomonadati</taxon>
        <taxon>Pseudomonadota</taxon>
        <taxon>Gammaproteobacteria</taxon>
        <taxon>Enterobacterales</taxon>
        <taxon>Enterobacteriaceae</taxon>
        <taxon>Escherichia</taxon>
    </lineage>
</organism>
<comment type="function">
    <text evidence="1">Uptake of L-rhamnose across the cytoplasmic membrane with the concomitant transport of protons into the cell (symport system).</text>
</comment>
<comment type="catalytic activity">
    <reaction evidence="1">
        <text>L-rhamnopyranose(in) + H(+)(in) = L-rhamnopyranose(out) + H(+)(out)</text>
        <dbReference type="Rhea" id="RHEA:29947"/>
        <dbReference type="ChEBI" id="CHEBI:15378"/>
        <dbReference type="ChEBI" id="CHEBI:62346"/>
    </reaction>
    <physiologicalReaction direction="right-to-left" evidence="1">
        <dbReference type="Rhea" id="RHEA:29949"/>
    </physiologicalReaction>
</comment>
<comment type="subcellular location">
    <subcellularLocation>
        <location evidence="1">Cell inner membrane</location>
        <topology evidence="1">Multi-pass membrane protein</topology>
    </subcellularLocation>
</comment>
<comment type="similarity">
    <text evidence="1">Belongs to the L-rhamnose transporter (TC 2.A.7.6) family.</text>
</comment>